<sequence>MSQSTSVLRRNGFTFKQFFVAHDRCAMKVGTDGILLGAWAPVAGVKRCLDIGAGSGLLALMLAQRTDDSVMIDAVELESEAAAQAQENINQSPWAERINVHTADIQQWITQQTVRFDLIISNPPYYQQGVECSTPQREQARYTTTLDHPSLLTCAAECITEEGFFCVVLPEQIGNGFTELALSMGWHLRLRTDVAENEARLPHRVLLAFSPQAGECFSDRLVIRGPDQNYSEAYTALTQAFYLFM</sequence>
<comment type="function">
    <text evidence="1">Specifically methylates the adenine in position 37 of tRNA(1)(Val) (anticodon cmo5UAC).</text>
</comment>
<comment type="catalytic activity">
    <reaction evidence="1">
        <text>adenosine(37) in tRNA1(Val) + S-adenosyl-L-methionine = N(6)-methyladenosine(37) in tRNA1(Val) + S-adenosyl-L-homocysteine + H(+)</text>
        <dbReference type="Rhea" id="RHEA:43160"/>
        <dbReference type="Rhea" id="RHEA-COMP:10369"/>
        <dbReference type="Rhea" id="RHEA-COMP:10370"/>
        <dbReference type="ChEBI" id="CHEBI:15378"/>
        <dbReference type="ChEBI" id="CHEBI:57856"/>
        <dbReference type="ChEBI" id="CHEBI:59789"/>
        <dbReference type="ChEBI" id="CHEBI:74411"/>
        <dbReference type="ChEBI" id="CHEBI:74449"/>
        <dbReference type="EC" id="2.1.1.223"/>
    </reaction>
</comment>
<comment type="subcellular location">
    <subcellularLocation>
        <location evidence="2">Cytoplasm</location>
    </subcellularLocation>
</comment>
<comment type="disruption phenotype">
    <text evidence="1">Cells lacking this gene show hypersensitivity to hyperosmotic and, to a lesser extent, oxidative stress.</text>
</comment>
<comment type="similarity">
    <text evidence="2">Belongs to the methyltransferase superfamily. tRNA (adenine-N(6)-)-methyltransferase family.</text>
</comment>
<dbReference type="EC" id="2.1.1.223"/>
<dbReference type="EMBL" id="D13169">
    <property type="status" value="NOT_ANNOTATED_CDS"/>
    <property type="molecule type" value="Genomic_DNA"/>
</dbReference>
<dbReference type="EMBL" id="D64044">
    <property type="status" value="NOT_ANNOTATED_CDS"/>
    <property type="molecule type" value="Genomic_DNA"/>
</dbReference>
<dbReference type="EMBL" id="U00096">
    <property type="protein sequence ID" value="AAC75628.2"/>
    <property type="molecule type" value="Genomic_DNA"/>
</dbReference>
<dbReference type="EMBL" id="AP009048">
    <property type="protein sequence ID" value="BAE76751.1"/>
    <property type="molecule type" value="Genomic_DNA"/>
</dbReference>
<dbReference type="PIR" id="F65035">
    <property type="entry name" value="F65035"/>
</dbReference>
<dbReference type="RefSeq" id="NP_417070.2">
    <property type="nucleotide sequence ID" value="NC_000913.3"/>
</dbReference>
<dbReference type="SMR" id="P31825"/>
<dbReference type="BioGRID" id="4260913">
    <property type="interactions" value="35"/>
</dbReference>
<dbReference type="FunCoup" id="P31825">
    <property type="interactions" value="36"/>
</dbReference>
<dbReference type="IntAct" id="P31825">
    <property type="interactions" value="4"/>
</dbReference>
<dbReference type="STRING" id="511145.b2575"/>
<dbReference type="jPOST" id="P31825"/>
<dbReference type="PaxDb" id="511145-b2575"/>
<dbReference type="EnsemblBacteria" id="AAC75628">
    <property type="protein sequence ID" value="AAC75628"/>
    <property type="gene ID" value="b2575"/>
</dbReference>
<dbReference type="GeneID" id="947047"/>
<dbReference type="KEGG" id="ecj:JW2559"/>
<dbReference type="KEGG" id="eco:b2575"/>
<dbReference type="KEGG" id="ecoc:C3026_14265"/>
<dbReference type="PATRIC" id="fig|511145.12.peg.2677"/>
<dbReference type="EchoBASE" id="EB1500"/>
<dbReference type="eggNOG" id="COG4123">
    <property type="taxonomic scope" value="Bacteria"/>
</dbReference>
<dbReference type="HOGENOM" id="CLU_061983_0_0_6"/>
<dbReference type="InParanoid" id="P31825"/>
<dbReference type="OMA" id="NQYTEAF"/>
<dbReference type="OrthoDB" id="5383291at2"/>
<dbReference type="PhylomeDB" id="P31825"/>
<dbReference type="BioCyc" id="EcoCyc:EG11538-MONOMER"/>
<dbReference type="BioCyc" id="MetaCyc:EG11538-MONOMER"/>
<dbReference type="BRENDA" id="2.1.1.223">
    <property type="organism ID" value="2026"/>
</dbReference>
<dbReference type="PRO" id="PR:P31825"/>
<dbReference type="Proteomes" id="UP000000625">
    <property type="component" value="Chromosome"/>
</dbReference>
<dbReference type="GO" id="GO:0005737">
    <property type="term" value="C:cytoplasm"/>
    <property type="evidence" value="ECO:0007669"/>
    <property type="project" value="UniProtKB-SubCell"/>
</dbReference>
<dbReference type="GO" id="GO:0003676">
    <property type="term" value="F:nucleic acid binding"/>
    <property type="evidence" value="ECO:0007669"/>
    <property type="project" value="InterPro"/>
</dbReference>
<dbReference type="GO" id="GO:0016430">
    <property type="term" value="F:tRNA (adenine-N6)-methyltransferase activity"/>
    <property type="evidence" value="ECO:0000314"/>
    <property type="project" value="EcoCyc"/>
</dbReference>
<dbReference type="GO" id="GO:0030488">
    <property type="term" value="P:tRNA methylation"/>
    <property type="evidence" value="ECO:0000315"/>
    <property type="project" value="EcoCyc"/>
</dbReference>
<dbReference type="CDD" id="cd02440">
    <property type="entry name" value="AdoMet_MTases"/>
    <property type="match status" value="1"/>
</dbReference>
<dbReference type="FunFam" id="3.40.50.150:FF:000087">
    <property type="entry name" value="tRNA1(Val) (adenine(37)-N6)-methyltransferase"/>
    <property type="match status" value="1"/>
</dbReference>
<dbReference type="Gene3D" id="3.40.50.150">
    <property type="entry name" value="Vaccinia Virus protein VP39"/>
    <property type="match status" value="1"/>
</dbReference>
<dbReference type="HAMAP" id="MF_01872">
    <property type="entry name" value="tRNA_methyltr_YfiC"/>
    <property type="match status" value="1"/>
</dbReference>
<dbReference type="InterPro" id="IPR002052">
    <property type="entry name" value="DNA_methylase_N6_adenine_CS"/>
</dbReference>
<dbReference type="InterPro" id="IPR029063">
    <property type="entry name" value="SAM-dependent_MTases_sf"/>
</dbReference>
<dbReference type="InterPro" id="IPR007848">
    <property type="entry name" value="Small_mtfrase_dom"/>
</dbReference>
<dbReference type="InterPro" id="IPR050210">
    <property type="entry name" value="tRNA_Adenine-N(6)_MTase"/>
</dbReference>
<dbReference type="InterPro" id="IPR022882">
    <property type="entry name" value="tRNA_adenine-N6_MeTrfase"/>
</dbReference>
<dbReference type="NCBIfam" id="NF047853">
    <property type="entry name" value="tRm6a37MtseTrmN"/>
    <property type="match status" value="1"/>
</dbReference>
<dbReference type="PANTHER" id="PTHR47739">
    <property type="entry name" value="TRNA1(VAL) (ADENINE(37)-N6)-METHYLTRANSFERASE"/>
    <property type="match status" value="1"/>
</dbReference>
<dbReference type="PANTHER" id="PTHR47739:SF1">
    <property type="entry name" value="TRNA1(VAL) (ADENINE(37)-N6)-METHYLTRANSFERASE"/>
    <property type="match status" value="1"/>
</dbReference>
<dbReference type="Pfam" id="PF05175">
    <property type="entry name" value="MTS"/>
    <property type="match status" value="1"/>
</dbReference>
<dbReference type="SUPFAM" id="SSF53335">
    <property type="entry name" value="S-adenosyl-L-methionine-dependent methyltransferases"/>
    <property type="match status" value="1"/>
</dbReference>
<dbReference type="PROSITE" id="PS00092">
    <property type="entry name" value="N6_MTASE"/>
    <property type="match status" value="1"/>
</dbReference>
<feature type="chain" id="PRO_0000169266" description="tRNA1(Val) (adenine(37)-N6)-methyltransferase">
    <location>
        <begin position="1"/>
        <end position="245"/>
    </location>
</feature>
<feature type="sequence conflict" description="In Ref. 1; D13169 and 2; D64044." evidence="2" ref="1 2">
    <original>A</original>
    <variation>R</variation>
    <location>
        <position position="83"/>
    </location>
</feature>
<feature type="sequence conflict" description="In Ref. 1; D13169 and 2; D64044." evidence="2" ref="1 2">
    <original>PQAGECFSDRLVIRGPDQNYSEAYTALTQAFYLFM</original>
    <variation>RRRENALAIA</variation>
    <location>
        <begin position="211"/>
        <end position="245"/>
    </location>
</feature>
<name>TRMN6_ECOLI</name>
<protein>
    <recommendedName>
        <fullName>tRNA1(Val) (adenine(37)-N6)-methyltransferase</fullName>
        <ecNumber>2.1.1.223</ecNumber>
    </recommendedName>
    <alternativeName>
        <fullName>tRNA m6A37 methyltransferase</fullName>
    </alternativeName>
</protein>
<keyword id="KW-0963">Cytoplasm</keyword>
<keyword id="KW-0489">Methyltransferase</keyword>
<keyword id="KW-1185">Reference proteome</keyword>
<keyword id="KW-0949">S-adenosyl-L-methionine</keyword>
<keyword id="KW-0808">Transferase</keyword>
<keyword id="KW-0819">tRNA processing</keyword>
<evidence type="ECO:0000269" key="1">
    <source>
    </source>
</evidence>
<evidence type="ECO:0000305" key="2"/>
<gene>
    <name type="primary">yfiC</name>
    <name type="ordered locus">b2575</name>
    <name type="ordered locus">JW2559</name>
</gene>
<organism>
    <name type="scientific">Escherichia coli (strain K12)</name>
    <dbReference type="NCBI Taxonomy" id="83333"/>
    <lineage>
        <taxon>Bacteria</taxon>
        <taxon>Pseudomonadati</taxon>
        <taxon>Pseudomonadota</taxon>
        <taxon>Gammaproteobacteria</taxon>
        <taxon>Enterobacterales</taxon>
        <taxon>Enterobacteriaceae</taxon>
        <taxon>Escherichia</taxon>
    </lineage>
</organism>
<reference key="1">
    <citation type="book" date="1993" name="The translational apparatus">
        <title>Non-ribosomal proteins affecting the assembly of ribosomes in Escherichia coli.</title>
        <editorList>
            <person name="Nierhaus K.H."/>
        </editorList>
        <authorList>
            <person name="Nashimoto H."/>
        </authorList>
    </citation>
    <scope>NUCLEOTIDE SEQUENCE [GENOMIC DNA]</scope>
    <source>
        <strain>K12</strain>
    </source>
</reference>
<reference key="2">
    <citation type="submission" date="1995-09" db="EMBL/GenBank/DDBJ databases">
        <authorList>
            <person name="Nashimoto H."/>
            <person name="Saito N."/>
        </authorList>
    </citation>
    <scope>NUCLEOTIDE SEQUENCE [GENOMIC DNA]</scope>
    <source>
        <strain>K12</strain>
    </source>
</reference>
<reference key="3">
    <citation type="journal article" date="1997" name="Science">
        <title>The complete genome sequence of Escherichia coli K-12.</title>
        <authorList>
            <person name="Blattner F.R."/>
            <person name="Plunkett G. III"/>
            <person name="Bloch C.A."/>
            <person name="Perna N.T."/>
            <person name="Burland V."/>
            <person name="Riley M."/>
            <person name="Collado-Vides J."/>
            <person name="Glasner J.D."/>
            <person name="Rode C.K."/>
            <person name="Mayhew G.F."/>
            <person name="Gregor J."/>
            <person name="Davis N.W."/>
            <person name="Kirkpatrick H.A."/>
            <person name="Goeden M.A."/>
            <person name="Rose D.J."/>
            <person name="Mau B."/>
            <person name="Shao Y."/>
        </authorList>
    </citation>
    <scope>NUCLEOTIDE SEQUENCE [LARGE SCALE GENOMIC DNA]</scope>
    <source>
        <strain>K12 / MG1655 / ATCC 47076</strain>
    </source>
</reference>
<reference key="4">
    <citation type="journal article" date="2006" name="Mol. Syst. Biol.">
        <title>Highly accurate genome sequences of Escherichia coli K-12 strains MG1655 and W3110.</title>
        <authorList>
            <person name="Hayashi K."/>
            <person name="Morooka N."/>
            <person name="Yamamoto Y."/>
            <person name="Fujita K."/>
            <person name="Isono K."/>
            <person name="Choi S."/>
            <person name="Ohtsubo E."/>
            <person name="Baba T."/>
            <person name="Wanner B.L."/>
            <person name="Mori H."/>
            <person name="Horiuchi T."/>
        </authorList>
    </citation>
    <scope>NUCLEOTIDE SEQUENCE [LARGE SCALE GENOMIC DNA]</scope>
    <source>
        <strain>K12 / W3110 / ATCC 27325 / DSM 5911</strain>
    </source>
</reference>
<reference key="5">
    <citation type="unpublished observations" date="1993-05">
        <authorList>
            <person name="Baum B."/>
            <person name="Koonin E.V."/>
        </authorList>
    </citation>
    <scope>SIMILARITY TO METHYLTRANSFERASES</scope>
</reference>
<reference key="6">
    <citation type="journal article" date="2009" name="RNA">
        <title>The yfiC gene of E. coli encodes an adenine-N6 methyltransferase that specifically modifies A37 of tRNA1Val(cmo5UAC).</title>
        <authorList>
            <person name="Golovina A.Y."/>
            <person name="Sergiev P.V."/>
            <person name="Golovin A.V."/>
            <person name="Serebryakova M.V."/>
            <person name="Demina I."/>
            <person name="Govorun V.M."/>
            <person name="Dontsova O.A."/>
        </authorList>
    </citation>
    <scope>FUNCTION AS A METHYLTRANSFERASE</scope>
    <scope>CATALYTIC ACTIVITY</scope>
    <scope>DISRUPTION PHENOTYPE</scope>
    <source>
        <strain>BW25141</strain>
    </source>
</reference>
<accession>P31825</accession>
<accession>P76591</accession>
<accession>Q2MAF5</accession>
<proteinExistence type="evidence at protein level"/>